<comment type="function">
    <text evidence="1">Catalyzes the transfer of an acyl group from acyl-phosphate (acyl-PO(4)) to glycerol-3-phosphate (G3P) to form lysophosphatidic acid (LPA). This enzyme utilizes acyl-phosphate as fatty acyl donor, but not acyl-CoA or acyl-ACP.</text>
</comment>
<comment type="catalytic activity">
    <reaction evidence="1">
        <text>an acyl phosphate + sn-glycerol 3-phosphate = a 1-acyl-sn-glycero-3-phosphate + phosphate</text>
        <dbReference type="Rhea" id="RHEA:34075"/>
        <dbReference type="ChEBI" id="CHEBI:43474"/>
        <dbReference type="ChEBI" id="CHEBI:57597"/>
        <dbReference type="ChEBI" id="CHEBI:57970"/>
        <dbReference type="ChEBI" id="CHEBI:59918"/>
        <dbReference type="EC" id="2.3.1.275"/>
    </reaction>
</comment>
<comment type="pathway">
    <text evidence="1">Lipid metabolism; phospholipid metabolism.</text>
</comment>
<comment type="subunit">
    <text evidence="1">Probably interacts with PlsX.</text>
</comment>
<comment type="subcellular location">
    <subcellularLocation>
        <location evidence="1">Cell membrane</location>
        <topology evidence="1">Multi-pass membrane protein</topology>
    </subcellularLocation>
</comment>
<comment type="similarity">
    <text evidence="1">Belongs to the PlsY family.</text>
</comment>
<organism>
    <name type="scientific">Desulforamulus reducens (strain ATCC BAA-1160 / DSM 100696 / MI-1)</name>
    <name type="common">Desulfotomaculum reducens</name>
    <dbReference type="NCBI Taxonomy" id="349161"/>
    <lineage>
        <taxon>Bacteria</taxon>
        <taxon>Bacillati</taxon>
        <taxon>Bacillota</taxon>
        <taxon>Clostridia</taxon>
        <taxon>Eubacteriales</taxon>
        <taxon>Peptococcaceae</taxon>
        <taxon>Desulforamulus</taxon>
    </lineage>
</organism>
<protein>
    <recommendedName>
        <fullName evidence="1">Glycerol-3-phosphate acyltransferase</fullName>
    </recommendedName>
    <alternativeName>
        <fullName evidence="1">Acyl-PO4 G3P acyltransferase</fullName>
    </alternativeName>
    <alternativeName>
        <fullName evidence="1">Acyl-phosphate--glycerol-3-phosphate acyltransferase</fullName>
    </alternativeName>
    <alternativeName>
        <fullName evidence="1">G3P acyltransferase</fullName>
        <shortName evidence="1">GPAT</shortName>
        <ecNumber evidence="1">2.3.1.275</ecNumber>
    </alternativeName>
    <alternativeName>
        <fullName evidence="1">Lysophosphatidic acid synthase</fullName>
        <shortName evidence="1">LPA synthase</shortName>
    </alternativeName>
</protein>
<keyword id="KW-1003">Cell membrane</keyword>
<keyword id="KW-0444">Lipid biosynthesis</keyword>
<keyword id="KW-0443">Lipid metabolism</keyword>
<keyword id="KW-0472">Membrane</keyword>
<keyword id="KW-0594">Phospholipid biosynthesis</keyword>
<keyword id="KW-1208">Phospholipid metabolism</keyword>
<keyword id="KW-1185">Reference proteome</keyword>
<keyword id="KW-0808">Transferase</keyword>
<keyword id="KW-0812">Transmembrane</keyword>
<keyword id="KW-1133">Transmembrane helix</keyword>
<proteinExistence type="inferred from homology"/>
<evidence type="ECO:0000255" key="1">
    <source>
        <dbReference type="HAMAP-Rule" id="MF_01043"/>
    </source>
</evidence>
<gene>
    <name evidence="1" type="primary">plsY</name>
    <name type="ordered locus">Dred_1161</name>
</gene>
<accession>A4J3P2</accession>
<dbReference type="EC" id="2.3.1.275" evidence="1"/>
<dbReference type="EMBL" id="CP000612">
    <property type="protein sequence ID" value="ABO49695.1"/>
    <property type="molecule type" value="Genomic_DNA"/>
</dbReference>
<dbReference type="RefSeq" id="WP_011877521.1">
    <property type="nucleotide sequence ID" value="NC_009253.1"/>
</dbReference>
<dbReference type="SMR" id="A4J3P2"/>
<dbReference type="STRING" id="349161.Dred_1161"/>
<dbReference type="KEGG" id="drm:Dred_1161"/>
<dbReference type="eggNOG" id="COG0344">
    <property type="taxonomic scope" value="Bacteria"/>
</dbReference>
<dbReference type="HOGENOM" id="CLU_081254_7_1_9"/>
<dbReference type="OrthoDB" id="9777124at2"/>
<dbReference type="UniPathway" id="UPA00085"/>
<dbReference type="Proteomes" id="UP000001556">
    <property type="component" value="Chromosome"/>
</dbReference>
<dbReference type="GO" id="GO:0005886">
    <property type="term" value="C:plasma membrane"/>
    <property type="evidence" value="ECO:0007669"/>
    <property type="project" value="UniProtKB-SubCell"/>
</dbReference>
<dbReference type="GO" id="GO:0043772">
    <property type="term" value="F:acyl-phosphate glycerol-3-phosphate acyltransferase activity"/>
    <property type="evidence" value="ECO:0007669"/>
    <property type="project" value="UniProtKB-UniRule"/>
</dbReference>
<dbReference type="GO" id="GO:0008654">
    <property type="term" value="P:phospholipid biosynthetic process"/>
    <property type="evidence" value="ECO:0007669"/>
    <property type="project" value="UniProtKB-UniRule"/>
</dbReference>
<dbReference type="HAMAP" id="MF_01043">
    <property type="entry name" value="PlsY"/>
    <property type="match status" value="1"/>
</dbReference>
<dbReference type="InterPro" id="IPR003811">
    <property type="entry name" value="G3P_acylTferase_PlsY"/>
</dbReference>
<dbReference type="NCBIfam" id="TIGR00023">
    <property type="entry name" value="glycerol-3-phosphate 1-O-acyltransferase PlsY"/>
    <property type="match status" value="1"/>
</dbReference>
<dbReference type="PANTHER" id="PTHR30309:SF0">
    <property type="entry name" value="GLYCEROL-3-PHOSPHATE ACYLTRANSFERASE-RELATED"/>
    <property type="match status" value="1"/>
</dbReference>
<dbReference type="PANTHER" id="PTHR30309">
    <property type="entry name" value="INNER MEMBRANE PROTEIN YGIH"/>
    <property type="match status" value="1"/>
</dbReference>
<dbReference type="Pfam" id="PF02660">
    <property type="entry name" value="G3P_acyltransf"/>
    <property type="match status" value="1"/>
</dbReference>
<dbReference type="SMART" id="SM01207">
    <property type="entry name" value="G3P_acyltransf"/>
    <property type="match status" value="1"/>
</dbReference>
<sequence length="200" mass="21628">MVHITTVMIIIGAYLIGSIPFGFLLAYFWKGIDIRKCGSGNIGATNVWRTLGKVPGMIVLILDMIKGISAVLLAKQLENTDIAVLGVALAVMAGHSWPLWLRFKGGKIIATGAGAILALSPMPLLLAFLVWLTTVVVSRYVSLGSILGAVSLPIWMALLNQNRHYLIFSVLVASFAVWKHSSNIGRLIKGTEFKIGQKKT</sequence>
<reference key="1">
    <citation type="submission" date="2007-03" db="EMBL/GenBank/DDBJ databases">
        <title>Complete sequence of Desulfotomaculum reducens MI-1.</title>
        <authorList>
            <consortium name="US DOE Joint Genome Institute"/>
            <person name="Copeland A."/>
            <person name="Lucas S."/>
            <person name="Lapidus A."/>
            <person name="Barry K."/>
            <person name="Detter J.C."/>
            <person name="Glavina del Rio T."/>
            <person name="Hammon N."/>
            <person name="Israni S."/>
            <person name="Dalin E."/>
            <person name="Tice H."/>
            <person name="Pitluck S."/>
            <person name="Sims D."/>
            <person name="Brettin T."/>
            <person name="Bruce D."/>
            <person name="Han C."/>
            <person name="Tapia R."/>
            <person name="Schmutz J."/>
            <person name="Larimer F."/>
            <person name="Land M."/>
            <person name="Hauser L."/>
            <person name="Kyrpides N."/>
            <person name="Kim E."/>
            <person name="Tebo B.M."/>
            <person name="Richardson P."/>
        </authorList>
    </citation>
    <scope>NUCLEOTIDE SEQUENCE [LARGE SCALE GENOMIC DNA]</scope>
    <source>
        <strain>ATCC BAA-1160 / DSM 100696 / MI-1</strain>
    </source>
</reference>
<name>PLSY_DESRM</name>
<feature type="chain" id="PRO_1000136080" description="Glycerol-3-phosphate acyltransferase">
    <location>
        <begin position="1"/>
        <end position="200"/>
    </location>
</feature>
<feature type="transmembrane region" description="Helical" evidence="1">
    <location>
        <begin position="9"/>
        <end position="29"/>
    </location>
</feature>
<feature type="transmembrane region" description="Helical" evidence="1">
    <location>
        <begin position="54"/>
        <end position="74"/>
    </location>
</feature>
<feature type="transmembrane region" description="Helical" evidence="1">
    <location>
        <begin position="81"/>
        <end position="101"/>
    </location>
</feature>
<feature type="transmembrane region" description="Helical" evidence="1">
    <location>
        <begin position="112"/>
        <end position="132"/>
    </location>
</feature>
<feature type="transmembrane region" description="Helical" evidence="1">
    <location>
        <begin position="140"/>
        <end position="160"/>
    </location>
</feature>
<feature type="transmembrane region" description="Helical" evidence="1">
    <location>
        <begin position="165"/>
        <end position="185"/>
    </location>
</feature>